<keyword id="KW-1185">Reference proteome</keyword>
<keyword id="KW-0677">Repeat</keyword>
<keyword id="KW-0694">RNA-binding</keyword>
<sequence length="886" mass="103580">MAKTKDKSIFVSSVDSDSDIEEIIMPPKPPVEVIQLDDSDDECQDICKPIYNKKVHKDPIVRVSYRQRIPESYFPGISTSLINVQREHNNRSKYDTWGSNSCSEPRISISNIERLEKPSYHEARRVPVFERLERSREISNGRNNQNPIRFNHKFVPPINRQTPLFNNQQLLVNVPFNEHHPTFLEPRPFYRSNVNEYNAGGLNRGSFRKMGRLNMEIVRDNDDFEEHFLAPNFPAKSASIDRRVDDSLSSNSYLRSGMIMASSERLEDPRFSGRLPVFARQINNQEINNDNFYQNSICYNHNNYPSNLESRVSFPFEARHHDADGLNRGRYQVMEHVNMGIMRNSEDFEDYDITQTDQDNHFYNDKDSGKHHRHRHRSKNNKKHKKHYDRNESGNSSECREEDDYEISNPSEKRHERKKRQRSSHRKESACVDEDNYILDEDRFYQQESDEYHNSLEMEREYEHGMDVGVKKEHSYKCDDIARNARKRARLTDDDMARREELFKEWSYSKEIVDGVTQLFGGPPRESERHQKKQKELVFEADRTAMHALSIRSGALVKARLLEIHYATGCHLIFLEEVKRGGYTYVELKGDPEHIKNAQKMIDDMVIDEHYIHDGRESIVYFYNAPHELRNTRGFDLNCRSIEKYCGIIIEKMREVFGIGGYVSTAPLKLTGSVNSIHMARETMQSKTKRFLDEEKFKETVEHCTPISFYRKIIGRCGENLKTIEKVTRTAIVFKRSFDNNEACFSIRGRTDNIKQAIEKIEEITHENQPADDDPGIFQVRVPENMVARLIGRHGVEINRIRSESKAKCYLNAIRGNLDDKFMVCSGGVEEAAYAAYLTKVKIGIIDPKVIQFNSDDFNNLSKVKPMEDPRLVMLKKRYAERKECK</sequence>
<name>YKR1_CAEEL</name>
<gene>
    <name evidence="4" type="primary">hrpk-2</name>
    <name evidence="4" type="ORF">C06G4.1</name>
</gene>
<reference key="1">
    <citation type="journal article" date="1994" name="Nature">
        <title>2.2 Mb of contiguous nucleotide sequence from chromosome III of C. elegans.</title>
        <authorList>
            <person name="Wilson R."/>
            <person name="Ainscough R."/>
            <person name="Anderson K."/>
            <person name="Baynes C."/>
            <person name="Berks M."/>
            <person name="Bonfield J."/>
            <person name="Burton J."/>
            <person name="Connell M."/>
            <person name="Copsey T."/>
            <person name="Cooper J."/>
            <person name="Coulson A."/>
            <person name="Craxton M."/>
            <person name="Dear S."/>
            <person name="Du Z."/>
            <person name="Durbin R."/>
            <person name="Favello A."/>
            <person name="Fraser A."/>
            <person name="Fulton L."/>
            <person name="Gardner A."/>
            <person name="Green P."/>
            <person name="Hawkins T."/>
            <person name="Hillier L."/>
            <person name="Jier M."/>
            <person name="Johnston L."/>
            <person name="Jones M."/>
            <person name="Kershaw J."/>
            <person name="Kirsten J."/>
            <person name="Laisster N."/>
            <person name="Latreille P."/>
            <person name="Lightning J."/>
            <person name="Lloyd C."/>
            <person name="Mortimore B."/>
            <person name="O'Callaghan M."/>
            <person name="Parsons J."/>
            <person name="Percy C."/>
            <person name="Rifken L."/>
            <person name="Roopra A."/>
            <person name="Saunders D."/>
            <person name="Shownkeen R."/>
            <person name="Sims M."/>
            <person name="Smaldon N."/>
            <person name="Smith A."/>
            <person name="Smith M."/>
            <person name="Sonnhammer E."/>
            <person name="Staden R."/>
            <person name="Sulston J."/>
            <person name="Thierry-Mieg J."/>
            <person name="Thomas K."/>
            <person name="Vaudin M."/>
            <person name="Vaughan K."/>
            <person name="Waterston R."/>
            <person name="Watson A."/>
            <person name="Weinstock L."/>
            <person name="Wilkinson-Sproat J."/>
            <person name="Wohldman P."/>
        </authorList>
    </citation>
    <scope>NUCLEOTIDE SEQUENCE [LARGE SCALE GENOMIC DNA]</scope>
    <source>
        <strain>Bristol N2</strain>
    </source>
</reference>
<reference key="2">
    <citation type="journal article" date="1998" name="Science">
        <title>Genome sequence of the nematode C. elegans: a platform for investigating biology.</title>
        <authorList>
            <consortium name="The C. elegans sequencing consortium"/>
        </authorList>
    </citation>
    <scope>NUCLEOTIDE SEQUENCE [LARGE SCALE GENOMIC DNA]</scope>
    <source>
        <strain>Bristol N2</strain>
    </source>
</reference>
<feature type="chain" id="PRO_0000050162" description="KH domain-containing protein hrpk-2">
    <location>
        <begin position="1"/>
        <end position="886"/>
    </location>
</feature>
<feature type="domain" description="KH 1" evidence="1">
    <location>
        <begin position="698"/>
        <end position="761"/>
    </location>
</feature>
<feature type="domain" description="KH 2" evidence="1">
    <location>
        <begin position="775"/>
        <end position="839"/>
    </location>
</feature>
<feature type="region of interest" description="Disordered" evidence="2">
    <location>
        <begin position="359"/>
        <end position="433"/>
    </location>
</feature>
<feature type="compositionally biased region" description="Basic and acidic residues" evidence="2">
    <location>
        <begin position="359"/>
        <end position="368"/>
    </location>
</feature>
<feature type="compositionally biased region" description="Basic residues" evidence="2">
    <location>
        <begin position="369"/>
        <end position="388"/>
    </location>
</feature>
<feature type="compositionally biased region" description="Basic residues" evidence="2">
    <location>
        <begin position="415"/>
        <end position="425"/>
    </location>
</feature>
<protein>
    <recommendedName>
        <fullName evidence="3">KH domain-containing protein hrpk-2</fullName>
    </recommendedName>
    <alternativeName>
        <fullName evidence="4">Heterogeneous nuclear ribonucleoprotein K homolog</fullName>
    </alternativeName>
</protein>
<proteinExistence type="predicted"/>
<dbReference type="EMBL" id="FO080399">
    <property type="protein sequence ID" value="CCD63431.1"/>
    <property type="molecule type" value="Genomic_DNA"/>
</dbReference>
<dbReference type="PIR" id="S44748">
    <property type="entry name" value="S44748"/>
</dbReference>
<dbReference type="SMR" id="P34307"/>
<dbReference type="BioGRID" id="41329">
    <property type="interactions" value="2"/>
</dbReference>
<dbReference type="FunCoup" id="P34307">
    <property type="interactions" value="247"/>
</dbReference>
<dbReference type="IntAct" id="P34307">
    <property type="interactions" value="1"/>
</dbReference>
<dbReference type="STRING" id="6239.C06G4.1.1"/>
<dbReference type="PaxDb" id="6239-C06G4.1"/>
<dbReference type="PeptideAtlas" id="P34307"/>
<dbReference type="EnsemblMetazoa" id="C06G4.1.1">
    <property type="protein sequence ID" value="C06G4.1.1"/>
    <property type="gene ID" value="WBGene00015557"/>
</dbReference>
<dbReference type="KEGG" id="cel:CELE_C06G4.1"/>
<dbReference type="UCSC" id="C06G4.1">
    <property type="organism name" value="c. elegans"/>
</dbReference>
<dbReference type="AGR" id="WB:WBGene00015557"/>
<dbReference type="CTD" id="176123"/>
<dbReference type="WormBase" id="C06G4.1">
    <property type="protein sequence ID" value="CE28203"/>
    <property type="gene ID" value="WBGene00015557"/>
    <property type="gene designation" value="hrpk-2"/>
</dbReference>
<dbReference type="eggNOG" id="KOG2208">
    <property type="taxonomic scope" value="Eukaryota"/>
</dbReference>
<dbReference type="HOGENOM" id="CLU_325481_0_0_1"/>
<dbReference type="InParanoid" id="P34307"/>
<dbReference type="OrthoDB" id="9995375at2759"/>
<dbReference type="Reactome" id="R-CEL-450604">
    <property type="pathway name" value="KSRP (KHSRP) binds and destabilizes mRNA"/>
</dbReference>
<dbReference type="PRO" id="PR:P34307"/>
<dbReference type="Proteomes" id="UP000001940">
    <property type="component" value="Chromosome III"/>
</dbReference>
<dbReference type="Bgee" id="WBGene00015557">
    <property type="expression patterns" value="Expressed in germ line (C elegans) and 4 other cell types or tissues"/>
</dbReference>
<dbReference type="GO" id="GO:0005737">
    <property type="term" value="C:cytoplasm"/>
    <property type="evidence" value="ECO:0000318"/>
    <property type="project" value="GO_Central"/>
</dbReference>
<dbReference type="GO" id="GO:0005634">
    <property type="term" value="C:nucleus"/>
    <property type="evidence" value="ECO:0000318"/>
    <property type="project" value="GO_Central"/>
</dbReference>
<dbReference type="GO" id="GO:0003729">
    <property type="term" value="F:mRNA binding"/>
    <property type="evidence" value="ECO:0000318"/>
    <property type="project" value="GO_Central"/>
</dbReference>
<dbReference type="GO" id="GO:0006397">
    <property type="term" value="P:mRNA processing"/>
    <property type="evidence" value="ECO:0000318"/>
    <property type="project" value="GO_Central"/>
</dbReference>
<dbReference type="GO" id="GO:0000381">
    <property type="term" value="P:regulation of alternative mRNA splicing, via spliceosome"/>
    <property type="evidence" value="ECO:0000318"/>
    <property type="project" value="GO_Central"/>
</dbReference>
<dbReference type="CDD" id="cd00105">
    <property type="entry name" value="KH-I"/>
    <property type="match status" value="1"/>
</dbReference>
<dbReference type="Gene3D" id="3.30.1370.10">
    <property type="entry name" value="K Homology domain, type 1"/>
    <property type="match status" value="2"/>
</dbReference>
<dbReference type="InterPro" id="IPR004087">
    <property type="entry name" value="KH_dom"/>
</dbReference>
<dbReference type="InterPro" id="IPR004088">
    <property type="entry name" value="KH_dom_type_1"/>
</dbReference>
<dbReference type="InterPro" id="IPR036612">
    <property type="entry name" value="KH_dom_type_1_sf"/>
</dbReference>
<dbReference type="PANTHER" id="PTHR10288">
    <property type="entry name" value="KH DOMAIN CONTAINING RNA BINDING PROTEIN"/>
    <property type="match status" value="1"/>
</dbReference>
<dbReference type="Pfam" id="PF00013">
    <property type="entry name" value="KH_1"/>
    <property type="match status" value="2"/>
</dbReference>
<dbReference type="SMART" id="SM00322">
    <property type="entry name" value="KH"/>
    <property type="match status" value="3"/>
</dbReference>
<dbReference type="SUPFAM" id="SSF54791">
    <property type="entry name" value="Eukaryotic type KH-domain (KH-domain type I)"/>
    <property type="match status" value="2"/>
</dbReference>
<dbReference type="PROSITE" id="PS50084">
    <property type="entry name" value="KH_TYPE_1"/>
    <property type="match status" value="2"/>
</dbReference>
<organism>
    <name type="scientific">Caenorhabditis elegans</name>
    <dbReference type="NCBI Taxonomy" id="6239"/>
    <lineage>
        <taxon>Eukaryota</taxon>
        <taxon>Metazoa</taxon>
        <taxon>Ecdysozoa</taxon>
        <taxon>Nematoda</taxon>
        <taxon>Chromadorea</taxon>
        <taxon>Rhabditida</taxon>
        <taxon>Rhabditina</taxon>
        <taxon>Rhabditomorpha</taxon>
        <taxon>Rhabditoidea</taxon>
        <taxon>Rhabditidae</taxon>
        <taxon>Peloderinae</taxon>
        <taxon>Caenorhabditis</taxon>
    </lineage>
</organism>
<evidence type="ECO:0000255" key="1">
    <source>
        <dbReference type="PROSITE-ProRule" id="PRU00117"/>
    </source>
</evidence>
<evidence type="ECO:0000256" key="2">
    <source>
        <dbReference type="SAM" id="MobiDB-lite"/>
    </source>
</evidence>
<evidence type="ECO:0000305" key="3"/>
<evidence type="ECO:0000312" key="4">
    <source>
        <dbReference type="WormBase" id="C06G4.1"/>
    </source>
</evidence>
<accession>P34307</accession>